<protein>
    <recommendedName>
        <fullName>Protein FixB</fullName>
    </recommendedName>
</protein>
<organism>
    <name type="scientific">Azotobacter vinelandii</name>
    <dbReference type="NCBI Taxonomy" id="354"/>
    <lineage>
        <taxon>Bacteria</taxon>
        <taxon>Pseudomonadati</taxon>
        <taxon>Pseudomonadota</taxon>
        <taxon>Gammaproteobacteria</taxon>
        <taxon>Pseudomonadales</taxon>
        <taxon>Pseudomonadaceae</taxon>
        <taxon>Azotobacter</taxon>
    </lineage>
</organism>
<keyword id="KW-0249">Electron transport</keyword>
<keyword id="KW-0274">FAD</keyword>
<keyword id="KW-0285">Flavoprotein</keyword>
<keyword id="KW-0535">Nitrogen fixation</keyword>
<keyword id="KW-0813">Transport</keyword>
<gene>
    <name type="primary">fixB</name>
</gene>
<accession>P53574</accession>
<name>FIXB_AZOVI</name>
<comment type="function">
    <text>May play a role in a redox process involved in nitrogen fixation.</text>
</comment>
<comment type="subunit">
    <text evidence="2">FixA and FixB form a heterodimer.</text>
</comment>
<comment type="similarity">
    <text evidence="2">Belongs to the ETF alpha-subunit/FixB family.</text>
</comment>
<proteinExistence type="inferred from homology"/>
<evidence type="ECO:0000255" key="1"/>
<evidence type="ECO:0000305" key="2"/>
<feature type="chain" id="PRO_0000167856" description="Protein FixB">
    <location>
        <begin position="1"/>
        <end position="360"/>
    </location>
</feature>
<feature type="binding site" evidence="1">
    <location>
        <begin position="293"/>
        <end position="321"/>
    </location>
    <ligand>
        <name>FAD</name>
        <dbReference type="ChEBI" id="CHEBI:57692"/>
    </ligand>
</feature>
<sequence>MSEQPKKPTKKKVELDPRFVDVRHVWVCIESERGVVHPVSWELLGEGRKSVDALGGELYGVVICGPGERGKEICGEPVQHGADKAYLLQHEILRDYRNEPYTKALTDLVTATQPEILMLGATTLGRDLAGSVATTLGTGLVADCTELVIDTETRNLASTRPTFDGSLLCKPSSAQRHRPQMATVRPRMAMPEPDASRSGEIIEVPFSMIETDIITKVLEFIPDDTRDKPNLPFADIIVAGGRGLRNQENFQLVWDLAKVLGAEVGASRPIVQAGWAELDRQVGQSGKTVRPKLYIAAGISGAIQHRVGMDGADVIIAINTDPNAPIFDFAHYGIVGNAITVLPALTEAFKARLGQLKKAG</sequence>
<dbReference type="EMBL" id="X65515">
    <property type="protein sequence ID" value="CAA46489.1"/>
    <property type="molecule type" value="Genomic_DNA"/>
</dbReference>
<dbReference type="PIR" id="S49188">
    <property type="entry name" value="S49188"/>
</dbReference>
<dbReference type="SMR" id="P53574"/>
<dbReference type="BioCyc" id="MetaCyc:MONOMER-21374"/>
<dbReference type="GO" id="GO:0009055">
    <property type="term" value="F:electron transfer activity"/>
    <property type="evidence" value="ECO:0007669"/>
    <property type="project" value="InterPro"/>
</dbReference>
<dbReference type="GO" id="GO:0050660">
    <property type="term" value="F:flavin adenine dinucleotide binding"/>
    <property type="evidence" value="ECO:0007669"/>
    <property type="project" value="InterPro"/>
</dbReference>
<dbReference type="GO" id="GO:0033539">
    <property type="term" value="P:fatty acid beta-oxidation using acyl-CoA dehydrogenase"/>
    <property type="evidence" value="ECO:0007669"/>
    <property type="project" value="TreeGrafter"/>
</dbReference>
<dbReference type="GO" id="GO:0009399">
    <property type="term" value="P:nitrogen fixation"/>
    <property type="evidence" value="ECO:0007669"/>
    <property type="project" value="UniProtKB-KW"/>
</dbReference>
<dbReference type="CDD" id="cd01715">
    <property type="entry name" value="ETF_alpha"/>
    <property type="match status" value="1"/>
</dbReference>
<dbReference type="Gene3D" id="3.40.50.620">
    <property type="entry name" value="HUPs"/>
    <property type="match status" value="1"/>
</dbReference>
<dbReference type="Gene3D" id="3.40.50.1220">
    <property type="entry name" value="TPP-binding domain"/>
    <property type="match status" value="1"/>
</dbReference>
<dbReference type="InterPro" id="IPR029035">
    <property type="entry name" value="DHS-like_NAD/FAD-binding_dom"/>
</dbReference>
<dbReference type="InterPro" id="IPR014730">
    <property type="entry name" value="ETF_a/b_N"/>
</dbReference>
<dbReference type="InterPro" id="IPR001308">
    <property type="entry name" value="ETF_a/FixB"/>
</dbReference>
<dbReference type="InterPro" id="IPR033947">
    <property type="entry name" value="ETF_alpha_N"/>
</dbReference>
<dbReference type="InterPro" id="IPR014731">
    <property type="entry name" value="ETF_asu_C"/>
</dbReference>
<dbReference type="InterPro" id="IPR018206">
    <property type="entry name" value="ETF_asu_C_CS"/>
</dbReference>
<dbReference type="InterPro" id="IPR014729">
    <property type="entry name" value="Rossmann-like_a/b/a_fold"/>
</dbReference>
<dbReference type="PANTHER" id="PTHR43153">
    <property type="entry name" value="ELECTRON TRANSFER FLAVOPROTEIN ALPHA"/>
    <property type="match status" value="1"/>
</dbReference>
<dbReference type="PANTHER" id="PTHR43153:SF1">
    <property type="entry name" value="ELECTRON TRANSFER FLAVOPROTEIN SUBUNIT ALPHA, MITOCHONDRIAL"/>
    <property type="match status" value="1"/>
</dbReference>
<dbReference type="Pfam" id="PF01012">
    <property type="entry name" value="ETF"/>
    <property type="match status" value="1"/>
</dbReference>
<dbReference type="Pfam" id="PF00766">
    <property type="entry name" value="ETF_alpha"/>
    <property type="match status" value="1"/>
</dbReference>
<dbReference type="PIRSF" id="PIRSF000089">
    <property type="entry name" value="Electra_flavoP_a"/>
    <property type="match status" value="1"/>
</dbReference>
<dbReference type="SMART" id="SM00893">
    <property type="entry name" value="ETF"/>
    <property type="match status" value="1"/>
</dbReference>
<dbReference type="SUPFAM" id="SSF52402">
    <property type="entry name" value="Adenine nucleotide alpha hydrolases-like"/>
    <property type="match status" value="1"/>
</dbReference>
<dbReference type="SUPFAM" id="SSF52467">
    <property type="entry name" value="DHS-like NAD/FAD-binding domain"/>
    <property type="match status" value="1"/>
</dbReference>
<dbReference type="PROSITE" id="PS00696">
    <property type="entry name" value="ETF_ALPHA"/>
    <property type="match status" value="1"/>
</dbReference>
<reference key="1">
    <citation type="submission" date="1994-07" db="EMBL/GenBank/DDBJ databases">
        <authorList>
            <person name="Wientjens R."/>
            <person name="van Dongen W."/>
            <person name="Haaker H."/>
        </authorList>
    </citation>
    <scope>NUCLEOTIDE SEQUENCE [GENOMIC DNA]</scope>
    <source>
        <strain>ATCC 478 / DSM 2289 / BCRC 14361 / JCM 21475 / KCTC 12137 / NBRC 102612 / NCIMB 12096 / NRRL B-14641 / VKM B-1617 / NRS 16</strain>
    </source>
</reference>